<sequence>MGKIIGIDLGTTNSCVAIMDGTKARVLENSEGDRTTPSIIAYTQDGETLVGQPAKRQAVTNPQNTLFAIKRLIGRRFQDEEAQRDKDIMPYKIIAADNGDAWLEVKGQKMAPPQISAEVLKKMKKTAEDYLGEPVTEAVITVPAYFNDAQRQATKDAGRIAGLEVKRIINEPTAAALAYGLDKEVGNRTIAVYDLGGGTFDISIIEIDEVDGEKTFEVLATNGDTHLGGEDFDSRLINYLVEEFKKDQGMDLRTDPLAMQRLKEAAEKAKIELSSAQQTDVNLPYITADGSGPKHMNIKVTRAKLESLVEDLVNRSIEPLKVALQDAGLSVSDIQDVILVGGQTRMPMVQKKVADFFGKEPRKDVNPDEAVAIGAAVQGGVLSGEVKDVLLLDVTPLSLGIETMGGVMTPLITKNTTIPTKHSQVFSTAEDNQSAVTIHVLQGERKRAQDNKSLGQFNLDGIQAAPRGMAQIEVTFDIDADGILHVSAKDKNTGREQKITIKASSGLNEEEIQKMVRDAEANAEADRKFEELVQTRNQADHLIHGTRKQLEEAGDKLPAEDKTAIEEAMKGLEAALKGEDKAEIEAKTQALVQVSGKLLEMAQQQQAAAGGDAGDTSAKKEDDVVDAEFEEVKDKK</sequence>
<comment type="function">
    <text evidence="1">Acts as a chaperone.</text>
</comment>
<comment type="induction">
    <text evidence="1">By stress conditions e.g. heat shock.</text>
</comment>
<comment type="similarity">
    <text evidence="1">Belongs to the heat shock protein 70 family.</text>
</comment>
<feature type="chain" id="PRO_1000059700" description="Chaperone protein DnaK">
    <location>
        <begin position="1"/>
        <end position="636"/>
    </location>
</feature>
<feature type="region of interest" description="Disordered" evidence="2">
    <location>
        <begin position="603"/>
        <end position="636"/>
    </location>
</feature>
<feature type="modified residue" description="Phosphothreonine; by autocatalysis" evidence="1">
    <location>
        <position position="199"/>
    </location>
</feature>
<name>DNAK_YERP3</name>
<organism>
    <name type="scientific">Yersinia pseudotuberculosis serotype O:1b (strain IP 31758)</name>
    <dbReference type="NCBI Taxonomy" id="349747"/>
    <lineage>
        <taxon>Bacteria</taxon>
        <taxon>Pseudomonadati</taxon>
        <taxon>Pseudomonadota</taxon>
        <taxon>Gammaproteobacteria</taxon>
        <taxon>Enterobacterales</taxon>
        <taxon>Yersiniaceae</taxon>
        <taxon>Yersinia</taxon>
    </lineage>
</organism>
<dbReference type="EMBL" id="CP000720">
    <property type="protein sequence ID" value="ABS48150.1"/>
    <property type="molecule type" value="Genomic_DNA"/>
</dbReference>
<dbReference type="RefSeq" id="WP_012105698.1">
    <property type="nucleotide sequence ID" value="NC_009708.1"/>
</dbReference>
<dbReference type="SMR" id="A7FME3"/>
<dbReference type="GeneID" id="96664112"/>
<dbReference type="KEGG" id="ypi:YpsIP31758_3466"/>
<dbReference type="HOGENOM" id="CLU_005965_2_1_6"/>
<dbReference type="Proteomes" id="UP000002412">
    <property type="component" value="Chromosome"/>
</dbReference>
<dbReference type="GO" id="GO:0005524">
    <property type="term" value="F:ATP binding"/>
    <property type="evidence" value="ECO:0007669"/>
    <property type="project" value="UniProtKB-UniRule"/>
</dbReference>
<dbReference type="GO" id="GO:0140662">
    <property type="term" value="F:ATP-dependent protein folding chaperone"/>
    <property type="evidence" value="ECO:0007669"/>
    <property type="project" value="InterPro"/>
</dbReference>
<dbReference type="GO" id="GO:0051082">
    <property type="term" value="F:unfolded protein binding"/>
    <property type="evidence" value="ECO:0007669"/>
    <property type="project" value="InterPro"/>
</dbReference>
<dbReference type="CDD" id="cd10234">
    <property type="entry name" value="ASKHA_NBD_HSP70_DnaK-like"/>
    <property type="match status" value="1"/>
</dbReference>
<dbReference type="FunFam" id="2.60.34.10:FF:000014">
    <property type="entry name" value="Chaperone protein DnaK HSP70"/>
    <property type="match status" value="1"/>
</dbReference>
<dbReference type="FunFam" id="1.20.1270.10:FF:000001">
    <property type="entry name" value="Molecular chaperone DnaK"/>
    <property type="match status" value="1"/>
</dbReference>
<dbReference type="FunFam" id="3.30.420.40:FF:000004">
    <property type="entry name" value="Molecular chaperone DnaK"/>
    <property type="match status" value="1"/>
</dbReference>
<dbReference type="FunFam" id="3.90.640.10:FF:000003">
    <property type="entry name" value="Molecular chaperone DnaK"/>
    <property type="match status" value="1"/>
</dbReference>
<dbReference type="Gene3D" id="1.20.1270.10">
    <property type="match status" value="1"/>
</dbReference>
<dbReference type="Gene3D" id="3.30.420.40">
    <property type="match status" value="2"/>
</dbReference>
<dbReference type="Gene3D" id="3.90.640.10">
    <property type="entry name" value="Actin, Chain A, domain 4"/>
    <property type="match status" value="1"/>
</dbReference>
<dbReference type="Gene3D" id="2.60.34.10">
    <property type="entry name" value="Substrate Binding Domain Of DNAk, Chain A, domain 1"/>
    <property type="match status" value="1"/>
</dbReference>
<dbReference type="HAMAP" id="MF_00332">
    <property type="entry name" value="DnaK"/>
    <property type="match status" value="1"/>
</dbReference>
<dbReference type="InterPro" id="IPR043129">
    <property type="entry name" value="ATPase_NBD"/>
</dbReference>
<dbReference type="InterPro" id="IPR012725">
    <property type="entry name" value="Chaperone_DnaK"/>
</dbReference>
<dbReference type="InterPro" id="IPR018181">
    <property type="entry name" value="Heat_shock_70_CS"/>
</dbReference>
<dbReference type="InterPro" id="IPR029048">
    <property type="entry name" value="HSP70_C_sf"/>
</dbReference>
<dbReference type="InterPro" id="IPR029047">
    <property type="entry name" value="HSP70_peptide-bd_sf"/>
</dbReference>
<dbReference type="InterPro" id="IPR013126">
    <property type="entry name" value="Hsp_70_fam"/>
</dbReference>
<dbReference type="NCBIfam" id="NF001413">
    <property type="entry name" value="PRK00290.1"/>
    <property type="match status" value="1"/>
</dbReference>
<dbReference type="NCBIfam" id="NF003520">
    <property type="entry name" value="PRK05183.1"/>
    <property type="match status" value="1"/>
</dbReference>
<dbReference type="NCBIfam" id="TIGR02350">
    <property type="entry name" value="prok_dnaK"/>
    <property type="match status" value="1"/>
</dbReference>
<dbReference type="PANTHER" id="PTHR19375">
    <property type="entry name" value="HEAT SHOCK PROTEIN 70KDA"/>
    <property type="match status" value="1"/>
</dbReference>
<dbReference type="Pfam" id="PF00012">
    <property type="entry name" value="HSP70"/>
    <property type="match status" value="1"/>
</dbReference>
<dbReference type="PRINTS" id="PR00301">
    <property type="entry name" value="HEATSHOCK70"/>
</dbReference>
<dbReference type="SUPFAM" id="SSF53067">
    <property type="entry name" value="Actin-like ATPase domain"/>
    <property type="match status" value="2"/>
</dbReference>
<dbReference type="SUPFAM" id="SSF100934">
    <property type="entry name" value="Heat shock protein 70kD (HSP70), C-terminal subdomain"/>
    <property type="match status" value="1"/>
</dbReference>
<dbReference type="SUPFAM" id="SSF100920">
    <property type="entry name" value="Heat shock protein 70kD (HSP70), peptide-binding domain"/>
    <property type="match status" value="1"/>
</dbReference>
<dbReference type="PROSITE" id="PS00297">
    <property type="entry name" value="HSP70_1"/>
    <property type="match status" value="1"/>
</dbReference>
<dbReference type="PROSITE" id="PS00329">
    <property type="entry name" value="HSP70_2"/>
    <property type="match status" value="1"/>
</dbReference>
<dbReference type="PROSITE" id="PS01036">
    <property type="entry name" value="HSP70_3"/>
    <property type="match status" value="1"/>
</dbReference>
<protein>
    <recommendedName>
        <fullName evidence="1">Chaperone protein DnaK</fullName>
    </recommendedName>
    <alternativeName>
        <fullName evidence="1">HSP70</fullName>
    </alternativeName>
    <alternativeName>
        <fullName evidence="1">Heat shock 70 kDa protein</fullName>
    </alternativeName>
    <alternativeName>
        <fullName evidence="1">Heat shock protein 70</fullName>
    </alternativeName>
</protein>
<gene>
    <name evidence="1" type="primary">dnaK</name>
    <name type="ordered locus">YpsIP31758_3466</name>
</gene>
<keyword id="KW-0067">ATP-binding</keyword>
<keyword id="KW-0143">Chaperone</keyword>
<keyword id="KW-0547">Nucleotide-binding</keyword>
<keyword id="KW-0597">Phosphoprotein</keyword>
<keyword id="KW-0346">Stress response</keyword>
<reference key="1">
    <citation type="journal article" date="2007" name="PLoS Genet.">
        <title>The complete genome sequence of Yersinia pseudotuberculosis IP31758, the causative agent of Far East scarlet-like fever.</title>
        <authorList>
            <person name="Eppinger M."/>
            <person name="Rosovitz M.J."/>
            <person name="Fricke W.F."/>
            <person name="Rasko D.A."/>
            <person name="Kokorina G."/>
            <person name="Fayolle C."/>
            <person name="Lindler L.E."/>
            <person name="Carniel E."/>
            <person name="Ravel J."/>
        </authorList>
    </citation>
    <scope>NUCLEOTIDE SEQUENCE [LARGE SCALE GENOMIC DNA]</scope>
    <source>
        <strain>IP 31758</strain>
    </source>
</reference>
<accession>A7FME3</accession>
<evidence type="ECO:0000255" key="1">
    <source>
        <dbReference type="HAMAP-Rule" id="MF_00332"/>
    </source>
</evidence>
<evidence type="ECO:0000256" key="2">
    <source>
        <dbReference type="SAM" id="MobiDB-lite"/>
    </source>
</evidence>
<proteinExistence type="inferred from homology"/>